<sequence length="148" mass="17097">MSEKNENVYDLSFFMPGKTIEAEEIKVPISKRFVDKKGNVIPFILKPITTERIDELEKENTTFKNVKGRGRVKDLDSQRFYARIAIESTIYPDFRSKDLREAYKTADPVEVAKRVLSVGGEYANWLNKAIEINGFEDDLEDLEEEAKN</sequence>
<organism>
    <name type="scientific">Bacillus subtilis (strain 168)</name>
    <dbReference type="NCBI Taxonomy" id="224308"/>
    <lineage>
        <taxon>Bacteria</taxon>
        <taxon>Bacillati</taxon>
        <taxon>Bacillota</taxon>
        <taxon>Bacilli</taxon>
        <taxon>Bacillales</taxon>
        <taxon>Bacillaceae</taxon>
        <taxon>Bacillus</taxon>
    </lineage>
</organism>
<name>XKDN_BACSU</name>
<dbReference type="EMBL" id="Z70177">
    <property type="protein sequence ID" value="CAA94036.1"/>
    <property type="status" value="ALT_FRAME"/>
    <property type="molecule type" value="Genomic_DNA"/>
</dbReference>
<dbReference type="EMBL" id="AL009126">
    <property type="protein sequence ID" value="CAB13124.2"/>
    <property type="molecule type" value="Genomic_DNA"/>
</dbReference>
<dbReference type="PIR" id="E69732">
    <property type="entry name" value="E69732"/>
</dbReference>
<dbReference type="RefSeq" id="NP_389149.2">
    <property type="nucleotide sequence ID" value="NC_000964.3"/>
</dbReference>
<dbReference type="RefSeq" id="WP_003232676.1">
    <property type="nucleotide sequence ID" value="NZ_OZ025638.1"/>
</dbReference>
<dbReference type="SMR" id="P54333"/>
<dbReference type="FunCoup" id="P54333">
    <property type="interactions" value="25"/>
</dbReference>
<dbReference type="STRING" id="224308.BSU12671"/>
<dbReference type="PaxDb" id="224308-BSU12671"/>
<dbReference type="EnsemblBacteria" id="CAB13124">
    <property type="protein sequence ID" value="CAB13124"/>
    <property type="gene ID" value="BSU_12671"/>
</dbReference>
<dbReference type="GeneID" id="939842"/>
<dbReference type="KEGG" id="bsu:BSU12671"/>
<dbReference type="PATRIC" id="fig|224308.179.peg.1373"/>
<dbReference type="eggNOG" id="ENOG50339DA">
    <property type="taxonomic scope" value="Bacteria"/>
</dbReference>
<dbReference type="InParanoid" id="P54333"/>
<dbReference type="OrthoDB" id="1807498at2"/>
<dbReference type="BioCyc" id="BSUB:BSU12671-MONOMER"/>
<dbReference type="Proteomes" id="UP000001570">
    <property type="component" value="Chromosome"/>
</dbReference>
<dbReference type="Gene3D" id="3.30.2220.30">
    <property type="match status" value="1"/>
</dbReference>
<dbReference type="InterPro" id="IPR014986">
    <property type="entry name" value="XkdN-like"/>
</dbReference>
<dbReference type="InterPro" id="IPR038559">
    <property type="entry name" value="XkdN-like_sf"/>
</dbReference>
<dbReference type="Pfam" id="PF08890">
    <property type="entry name" value="Phage_TAC_5"/>
    <property type="match status" value="1"/>
</dbReference>
<reference key="1">
    <citation type="submission" date="1996-03" db="EMBL/GenBank/DDBJ databases">
        <authorList>
            <person name="Krogh S."/>
            <person name="O'Reilly M."/>
            <person name="Nolan N."/>
            <person name="Devine K.M."/>
        </authorList>
    </citation>
    <scope>NUCLEOTIDE SEQUENCE [GENOMIC DNA]</scope>
    <source>
        <strain>168</strain>
    </source>
</reference>
<reference key="2">
    <citation type="journal article" date="1997" name="Nature">
        <title>The complete genome sequence of the Gram-positive bacterium Bacillus subtilis.</title>
        <authorList>
            <person name="Kunst F."/>
            <person name="Ogasawara N."/>
            <person name="Moszer I."/>
            <person name="Albertini A.M."/>
            <person name="Alloni G."/>
            <person name="Azevedo V."/>
            <person name="Bertero M.G."/>
            <person name="Bessieres P."/>
            <person name="Bolotin A."/>
            <person name="Borchert S."/>
            <person name="Borriss R."/>
            <person name="Boursier L."/>
            <person name="Brans A."/>
            <person name="Braun M."/>
            <person name="Brignell S.C."/>
            <person name="Bron S."/>
            <person name="Brouillet S."/>
            <person name="Bruschi C.V."/>
            <person name="Caldwell B."/>
            <person name="Capuano V."/>
            <person name="Carter N.M."/>
            <person name="Choi S.-K."/>
            <person name="Codani J.-J."/>
            <person name="Connerton I.F."/>
            <person name="Cummings N.J."/>
            <person name="Daniel R.A."/>
            <person name="Denizot F."/>
            <person name="Devine K.M."/>
            <person name="Duesterhoeft A."/>
            <person name="Ehrlich S.D."/>
            <person name="Emmerson P.T."/>
            <person name="Entian K.-D."/>
            <person name="Errington J."/>
            <person name="Fabret C."/>
            <person name="Ferrari E."/>
            <person name="Foulger D."/>
            <person name="Fritz C."/>
            <person name="Fujita M."/>
            <person name="Fujita Y."/>
            <person name="Fuma S."/>
            <person name="Galizzi A."/>
            <person name="Galleron N."/>
            <person name="Ghim S.-Y."/>
            <person name="Glaser P."/>
            <person name="Goffeau A."/>
            <person name="Golightly E.J."/>
            <person name="Grandi G."/>
            <person name="Guiseppi G."/>
            <person name="Guy B.J."/>
            <person name="Haga K."/>
            <person name="Haiech J."/>
            <person name="Harwood C.R."/>
            <person name="Henaut A."/>
            <person name="Hilbert H."/>
            <person name="Holsappel S."/>
            <person name="Hosono S."/>
            <person name="Hullo M.-F."/>
            <person name="Itaya M."/>
            <person name="Jones L.-M."/>
            <person name="Joris B."/>
            <person name="Karamata D."/>
            <person name="Kasahara Y."/>
            <person name="Klaerr-Blanchard M."/>
            <person name="Klein C."/>
            <person name="Kobayashi Y."/>
            <person name="Koetter P."/>
            <person name="Koningstein G."/>
            <person name="Krogh S."/>
            <person name="Kumano M."/>
            <person name="Kurita K."/>
            <person name="Lapidus A."/>
            <person name="Lardinois S."/>
            <person name="Lauber J."/>
            <person name="Lazarevic V."/>
            <person name="Lee S.-M."/>
            <person name="Levine A."/>
            <person name="Liu H."/>
            <person name="Masuda S."/>
            <person name="Mauel C."/>
            <person name="Medigue C."/>
            <person name="Medina N."/>
            <person name="Mellado R.P."/>
            <person name="Mizuno M."/>
            <person name="Moestl D."/>
            <person name="Nakai S."/>
            <person name="Noback M."/>
            <person name="Noone D."/>
            <person name="O'Reilly M."/>
            <person name="Ogawa K."/>
            <person name="Ogiwara A."/>
            <person name="Oudega B."/>
            <person name="Park S.-H."/>
            <person name="Parro V."/>
            <person name="Pohl T.M."/>
            <person name="Portetelle D."/>
            <person name="Porwollik S."/>
            <person name="Prescott A.M."/>
            <person name="Presecan E."/>
            <person name="Pujic P."/>
            <person name="Purnelle B."/>
            <person name="Rapoport G."/>
            <person name="Rey M."/>
            <person name="Reynolds S."/>
            <person name="Rieger M."/>
            <person name="Rivolta C."/>
            <person name="Rocha E."/>
            <person name="Roche B."/>
            <person name="Rose M."/>
            <person name="Sadaie Y."/>
            <person name="Sato T."/>
            <person name="Scanlan E."/>
            <person name="Schleich S."/>
            <person name="Schroeter R."/>
            <person name="Scoffone F."/>
            <person name="Sekiguchi J."/>
            <person name="Sekowska A."/>
            <person name="Seror S.J."/>
            <person name="Serror P."/>
            <person name="Shin B.-S."/>
            <person name="Soldo B."/>
            <person name="Sorokin A."/>
            <person name="Tacconi E."/>
            <person name="Takagi T."/>
            <person name="Takahashi H."/>
            <person name="Takemaru K."/>
            <person name="Takeuchi M."/>
            <person name="Tamakoshi A."/>
            <person name="Tanaka T."/>
            <person name="Terpstra P."/>
            <person name="Tognoni A."/>
            <person name="Tosato V."/>
            <person name="Uchiyama S."/>
            <person name="Vandenbol M."/>
            <person name="Vannier F."/>
            <person name="Vassarotti A."/>
            <person name="Viari A."/>
            <person name="Wambutt R."/>
            <person name="Wedler E."/>
            <person name="Wedler H."/>
            <person name="Weitzenegger T."/>
            <person name="Winters P."/>
            <person name="Wipat A."/>
            <person name="Yamamoto H."/>
            <person name="Yamane K."/>
            <person name="Yasumoto K."/>
            <person name="Yata K."/>
            <person name="Yoshida K."/>
            <person name="Yoshikawa H.-F."/>
            <person name="Zumstein E."/>
            <person name="Yoshikawa H."/>
            <person name="Danchin A."/>
        </authorList>
    </citation>
    <scope>NUCLEOTIDE SEQUENCE [LARGE SCALE GENOMIC DNA]</scope>
    <source>
        <strain>168</strain>
    </source>
</reference>
<reference key="3">
    <citation type="journal article" date="2009" name="Microbiology">
        <title>From a consortium sequence to a unified sequence: the Bacillus subtilis 168 reference genome a decade later.</title>
        <authorList>
            <person name="Barbe V."/>
            <person name="Cruveiller S."/>
            <person name="Kunst F."/>
            <person name="Lenoble P."/>
            <person name="Meurice G."/>
            <person name="Sekowska A."/>
            <person name="Vallenet D."/>
            <person name="Wang T."/>
            <person name="Moszer I."/>
            <person name="Medigue C."/>
            <person name="Danchin A."/>
        </authorList>
    </citation>
    <scope>SEQUENCE REVISION TO 68 AND C-TERMINUS</scope>
</reference>
<comment type="similarity">
    <text evidence="1">To B.subtilis YqbN.</text>
</comment>
<comment type="sequence caution" evidence="1">
    <conflict type="frameshift">
        <sequence resource="EMBL-CDS" id="CAA94036"/>
    </conflict>
</comment>
<keyword id="KW-1185">Reference proteome</keyword>
<gene>
    <name type="primary">xkdN</name>
    <name type="ordered locus">BSU12670</name>
</gene>
<protein>
    <recommendedName>
        <fullName>Phage-like element PBSX protein XkdN</fullName>
    </recommendedName>
</protein>
<evidence type="ECO:0000305" key="1"/>
<feature type="chain" id="PRO_0000066027" description="Phage-like element PBSX protein XkdN">
    <location>
        <begin position="1"/>
        <end position="148"/>
    </location>
</feature>
<feature type="sequence conflict" description="In Ref. 1; CAA94036." evidence="1" ref="1">
    <original>G</original>
    <variation>S</variation>
    <location>
        <position position="68"/>
    </location>
</feature>
<accession>P54333</accession>
<proteinExistence type="predicted"/>